<reference key="1">
    <citation type="journal article" date="2013" name="Peptides">
        <title>Molecular and bioinformatical characterization of a novel superfamily of cysteine-rich peptides from arthropods.</title>
        <authorList>
            <person name="Zeng X.C."/>
            <person name="Nie Y."/>
            <person name="Luo X."/>
            <person name="Wu S."/>
            <person name="Shi W."/>
            <person name="Zhang L."/>
            <person name="Liu Y."/>
            <person name="Cao H."/>
            <person name="Yang Y."/>
            <person name="Zhou J."/>
        </authorList>
    </citation>
    <scope>NUCLEOTIDE SEQUENCE [MRNA]</scope>
    <source>
        <tissue>Venom gland</tissue>
    </source>
</reference>
<protein>
    <recommendedName>
        <fullName>Venom peptide HsVx1</fullName>
    </recommendedName>
    <alternativeName>
        <fullName>HsTx1 protein</fullName>
    </alternativeName>
</protein>
<keyword id="KW-1015">Disulfide bond</keyword>
<keyword id="KW-0964">Secreted</keyword>
<keyword id="KW-0732">Signal</keyword>
<keyword id="KW-0800">Toxin</keyword>
<dbReference type="EMBL" id="JQ821370">
    <property type="protein sequence ID" value="AFR60582.1"/>
    <property type="molecule type" value="Genomic_DNA"/>
</dbReference>
<dbReference type="EMBL" id="KC140563">
    <property type="protein sequence ID" value="AFX60852.1"/>
    <property type="molecule type" value="mRNA"/>
</dbReference>
<dbReference type="SMR" id="K7WMX6"/>
<dbReference type="GO" id="GO:0005576">
    <property type="term" value="C:extracellular region"/>
    <property type="evidence" value="ECO:0007669"/>
    <property type="project" value="UniProtKB-SubCell"/>
</dbReference>
<dbReference type="GO" id="GO:0090729">
    <property type="term" value="F:toxin activity"/>
    <property type="evidence" value="ECO:0007669"/>
    <property type="project" value="UniProtKB-KW"/>
</dbReference>
<dbReference type="InterPro" id="IPR029277">
    <property type="entry name" value="SVWC_dom"/>
</dbReference>
<dbReference type="Pfam" id="PF15430">
    <property type="entry name" value="SVWC"/>
    <property type="match status" value="1"/>
</dbReference>
<dbReference type="SMART" id="SM01318">
    <property type="entry name" value="SVWC"/>
    <property type="match status" value="1"/>
</dbReference>
<comment type="subcellular location">
    <subcellularLocation>
        <location evidence="1">Secreted</location>
    </subcellularLocation>
</comment>
<comment type="tissue specificity">
    <text>Expressed by the venom gland.</text>
</comment>
<comment type="PTM">
    <text evidence="1">Contains 4 disulfide bonds.</text>
</comment>
<comment type="miscellaneous">
    <text evidence="4">Negative results: this recombinant protein is not able to act on sodium channels (Nav).</text>
</comment>
<comment type="similarity">
    <text evidence="3">Belongs to the scorpion La1-like peptide family.</text>
</comment>
<evidence type="ECO:0000250" key="1"/>
<evidence type="ECO:0000255" key="2"/>
<evidence type="ECO:0000305" key="3"/>
<evidence type="ECO:0000305" key="4">
    <source>
    </source>
</evidence>
<proteinExistence type="evidence at transcript level"/>
<accession>K7WMX6</accession>
<feature type="signal peptide" evidence="2">
    <location>
        <begin position="1"/>
        <end position="20"/>
    </location>
</feature>
<feature type="chain" id="PRO_0000428818" description="Venom peptide HsVx1">
    <location>
        <begin position="21"/>
        <end position="97"/>
    </location>
</feature>
<sequence length="97" mass="10333">MSHLRIAVTFLCTLFALTAGAGESCQVGGSAIPVGKTKQELCNLYECATDSNRVVLKKLTCAEQAVKTGCRSVPGDANAPFPDCCPTTLCRGRQWDH</sequence>
<name>LA1_HETSP</name>
<organism>
    <name type="scientific">Heterometrus spinifer</name>
    <name type="common">Asia giant forest scorpion</name>
    <name type="synonym">Malaysian black scorpion</name>
    <dbReference type="NCBI Taxonomy" id="118530"/>
    <lineage>
        <taxon>Eukaryota</taxon>
        <taxon>Metazoa</taxon>
        <taxon>Ecdysozoa</taxon>
        <taxon>Arthropoda</taxon>
        <taxon>Chelicerata</taxon>
        <taxon>Arachnida</taxon>
        <taxon>Scorpiones</taxon>
        <taxon>Iurida</taxon>
        <taxon>Scorpionoidea</taxon>
        <taxon>Scorpionidae</taxon>
        <taxon>Heterometrinae</taxon>
        <taxon>Heterometrus</taxon>
    </lineage>
</organism>